<sequence length="200" mass="22037">MDDKKKKRSPKPCLAQPAQAPGTLRRVPVPTSHSGSLALGLPHLPSPKQRAKFKRVGKEKCRPVLAGGGSGSAGTPLQHSFLTEVTDVYEMEGGLLNLLNDFHSGRLQAFGKECSFEQLEHVREMQEKLARLHFSLDVCGEEEDDEEEEDGVTEGLPEEQKKTMADRNLDQLLSNLEDLSNSIQKLHLAENAEPEEQSAA</sequence>
<feature type="chain" id="PRO_0000234094" description="Coiled-coil domain-containing protein 28B">
    <location>
        <begin position="1"/>
        <end position="200"/>
    </location>
</feature>
<feature type="region of interest" description="Disordered" evidence="2">
    <location>
        <begin position="1"/>
        <end position="49"/>
    </location>
</feature>
<feature type="region of interest" description="Disordered" evidence="2">
    <location>
        <begin position="141"/>
        <end position="164"/>
    </location>
</feature>
<feature type="coiled-coil region" evidence="1">
    <location>
        <begin position="158"/>
        <end position="183"/>
    </location>
</feature>
<feature type="compositionally biased region" description="Basic residues" evidence="2">
    <location>
        <begin position="1"/>
        <end position="10"/>
    </location>
</feature>
<feature type="compositionally biased region" description="Acidic residues" evidence="2">
    <location>
        <begin position="141"/>
        <end position="152"/>
    </location>
</feature>
<feature type="modified residue" description="N-acetylmethionine" evidence="8">
    <location>
        <position position="1"/>
    </location>
</feature>
<feature type="modified residue" description="Phosphoserine" evidence="7">
    <location>
        <position position="46"/>
    </location>
</feature>
<feature type="modified residue" description="Phosphoserine" evidence="9">
    <location>
        <position position="115"/>
    </location>
</feature>
<feature type="splice variant" id="VSP_046552" description="In isoform 2." evidence="6">
    <original>IQKLHLAENAEPEEQSAA</original>
    <variation>MYPFQGTRLCVCVPERSVSSSPALQEYSHTTNFPTSCSPVRFSHRLPKPRYRNLEFPQN</variation>
    <location>
        <begin position="183"/>
        <end position="200"/>
    </location>
</feature>
<feature type="sequence variant" id="VAR_056776" description="In dbSNP:rs1407134.">
    <original>R</original>
    <variation>W</variation>
    <location>
        <position position="25"/>
    </location>
</feature>
<organism>
    <name type="scientific">Homo sapiens</name>
    <name type="common">Human</name>
    <dbReference type="NCBI Taxonomy" id="9606"/>
    <lineage>
        <taxon>Eukaryota</taxon>
        <taxon>Metazoa</taxon>
        <taxon>Chordata</taxon>
        <taxon>Craniata</taxon>
        <taxon>Vertebrata</taxon>
        <taxon>Euteleostomi</taxon>
        <taxon>Mammalia</taxon>
        <taxon>Eutheria</taxon>
        <taxon>Euarchontoglires</taxon>
        <taxon>Primates</taxon>
        <taxon>Haplorrhini</taxon>
        <taxon>Catarrhini</taxon>
        <taxon>Hominidae</taxon>
        <taxon>Homo</taxon>
    </lineage>
</organism>
<gene>
    <name type="primary">CCDC28B</name>
</gene>
<accession>Q9BUN5</accession>
<accession>A8K789</accession>
<accession>Q8TBV8</accession>
<name>CC28B_HUMAN</name>
<comment type="function">
    <text evidence="4 5">Involved in ciliogenesis. Regulates cilia length through its interaction with MAPKAP1/SIN1 but independently of mTORC2 complex. Modulates mTORC2 complex assembly and function, possibly enhances AKT1 phosphorylation. Does not seem to modulate assembly and function of mTORC1 complex.</text>
</comment>
<comment type="subunit">
    <text evidence="3 5">Interacts with BBS1, BBS2, BBS4, BBS5, BBS6, BBS7 and TTC8/BBS8. Interacts with MAPKAP1/SIN1 isoform 1 and RICTOR.</text>
</comment>
<comment type="interaction">
    <interactant intactId="EBI-10299032">
        <id>Q9BUN5</id>
    </interactant>
    <interactant intactId="EBI-747353">
        <id>Q8WXE1</id>
        <label>ATRIP</label>
    </interactant>
    <organismsDiffer>false</organismsDiffer>
    <experiments>3</experiments>
</comment>
<comment type="interaction">
    <interactant intactId="EBI-10299032">
        <id>Q9BUN5</id>
    </interactant>
    <interactant intactId="EBI-1805814">
        <id>Q96RK4</id>
        <label>BBS4</label>
    </interactant>
    <organismsDiffer>false</organismsDiffer>
    <experiments>3</experiments>
</comment>
<comment type="interaction">
    <interactant intactId="EBI-12920646">
        <id>Q9BUN5-3</id>
    </interactant>
    <interactant intactId="EBI-742909">
        <id>Q9H6L4</id>
        <label>ARMC7</label>
    </interactant>
    <organismsDiffer>false</organismsDiffer>
    <experiments>3</experiments>
</comment>
<comment type="interaction">
    <interactant intactId="EBI-12920646">
        <id>Q9BUN5-3</id>
    </interactant>
    <interactant intactId="EBI-744099">
        <id>Q9H0I2</id>
        <label>ENKD1</label>
    </interactant>
    <organismsDiffer>false</organismsDiffer>
    <experiments>3</experiments>
</comment>
<comment type="interaction">
    <interactant intactId="EBI-12920646">
        <id>Q9BUN5-3</id>
    </interactant>
    <interactant intactId="EBI-401755">
        <id>P62993</id>
        <label>GRB2</label>
    </interactant>
    <organismsDiffer>false</organismsDiffer>
    <experiments>3</experiments>
</comment>
<comment type="interaction">
    <interactant intactId="EBI-12920646">
        <id>Q9BUN5-3</id>
    </interactant>
    <interactant intactId="EBI-1053424">
        <id>O43741</id>
        <label>PRKAB2</label>
    </interactant>
    <organismsDiffer>false</organismsDiffer>
    <experiments>5</experiments>
</comment>
<comment type="interaction">
    <interactant intactId="EBI-12920646">
        <id>Q9BUN5-3</id>
    </interactant>
    <interactant intactId="EBI-748391">
        <id>Q9BWG6</id>
        <label>SCNM1</label>
    </interactant>
    <organismsDiffer>false</organismsDiffer>
    <experiments>3</experiments>
</comment>
<comment type="interaction">
    <interactant intactId="EBI-12920646">
        <id>Q9BUN5-3</id>
    </interactant>
    <interactant intactId="EBI-607755">
        <id>Q9BZL1</id>
        <label>UBL5</label>
    </interactant>
    <organismsDiffer>false</organismsDiffer>
    <experiments>3</experiments>
</comment>
<comment type="subcellular location">
    <subcellularLocation>
        <location evidence="3">Cytoplasm</location>
        <location evidence="3">Cytoskeleton</location>
        <location evidence="3">Microtubule organizing center</location>
        <location evidence="3">Centrosome</location>
    </subcellularLocation>
    <text>It localizes near centrosomes and basal bodies.</text>
</comment>
<comment type="alternative products">
    <event type="alternative splicing"/>
    <isoform>
        <id>Q9BUN5-1</id>
        <name>1</name>
        <sequence type="displayed"/>
    </isoform>
    <isoform>
        <id>Q9BUN5-3</id>
        <name>2</name>
        <sequence type="described" ref="VSP_046552"/>
    </isoform>
</comment>
<comment type="disease" evidence="3">
    <disease id="DI-03107">
        <name>Bardet-Biedl syndrome</name>
        <acronym>BBS</acronym>
        <description>A syndrome characterized by usually severe pigmentary retinopathy, early-onset obesity, polydactyly, hypogenitalism, renal malformation and intellectual disability. Secondary features include diabetes mellitus, hypertension and congenital heart disease. Bardet-Biedl syndrome inheritance is autosomal recessive, but three mutated alleles (two at one locus, and a third at a second locus) may be required for clinical manifestation of some forms of the disease.</description>
        <dbReference type="MIM" id="209900"/>
    </disease>
    <text>The gene represented in this entry acts as a disease modifier.</text>
</comment>
<proteinExistence type="evidence at protein level"/>
<evidence type="ECO:0000255" key="1"/>
<evidence type="ECO:0000256" key="2">
    <source>
        <dbReference type="SAM" id="MobiDB-lite"/>
    </source>
</evidence>
<evidence type="ECO:0000269" key="3">
    <source>
    </source>
</evidence>
<evidence type="ECO:0000269" key="4">
    <source>
    </source>
</evidence>
<evidence type="ECO:0000269" key="5">
    <source>
    </source>
</evidence>
<evidence type="ECO:0000303" key="6">
    <source>
    </source>
</evidence>
<evidence type="ECO:0007744" key="7">
    <source>
    </source>
</evidence>
<evidence type="ECO:0007744" key="8">
    <source>
    </source>
</evidence>
<evidence type="ECO:0007744" key="9">
    <source>
    </source>
</evidence>
<protein>
    <recommendedName>
        <fullName>Coiled-coil domain-containing protein 28B</fullName>
    </recommendedName>
</protein>
<dbReference type="EMBL" id="AK291904">
    <property type="protein sequence ID" value="BAF84593.1"/>
    <property type="molecule type" value="mRNA"/>
</dbReference>
<dbReference type="EMBL" id="AL049795">
    <property type="status" value="NOT_ANNOTATED_CDS"/>
    <property type="molecule type" value="Genomic_DNA"/>
</dbReference>
<dbReference type="EMBL" id="CH471059">
    <property type="protein sequence ID" value="EAX07564.1"/>
    <property type="molecule type" value="Genomic_DNA"/>
</dbReference>
<dbReference type="EMBL" id="BC002462">
    <property type="status" value="NOT_ANNOTATED_CDS"/>
    <property type="molecule type" value="mRNA"/>
</dbReference>
<dbReference type="EMBL" id="BC022848">
    <property type="protein sequence ID" value="AAH22848.1"/>
    <property type="molecule type" value="mRNA"/>
</dbReference>
<dbReference type="CCDS" id="CCDS354.2">
    <molecule id="Q9BUN5-1"/>
</dbReference>
<dbReference type="CCDS" id="CCDS72749.1">
    <molecule id="Q9BUN5-3"/>
</dbReference>
<dbReference type="RefSeq" id="NP_001287940.1">
    <molecule id="Q9BUN5-3"/>
    <property type="nucleotide sequence ID" value="NM_001301011.2"/>
</dbReference>
<dbReference type="RefSeq" id="NP_077272.2">
    <molecule id="Q9BUN5-1"/>
    <property type="nucleotide sequence ID" value="NM_024296.5"/>
</dbReference>
<dbReference type="RefSeq" id="XP_011540415.1">
    <molecule id="Q9BUN5-3"/>
    <property type="nucleotide sequence ID" value="XM_011542113.4"/>
</dbReference>
<dbReference type="RefSeq" id="XP_016857796.1">
    <molecule id="Q9BUN5-1"/>
    <property type="nucleotide sequence ID" value="XM_017002307.2"/>
</dbReference>
<dbReference type="RefSeq" id="XP_047286171.1">
    <molecule id="Q9BUN5-3"/>
    <property type="nucleotide sequence ID" value="XM_047430215.1"/>
</dbReference>
<dbReference type="RefSeq" id="XP_047286173.1">
    <molecule id="Q9BUN5-1"/>
    <property type="nucleotide sequence ID" value="XM_047430217.1"/>
</dbReference>
<dbReference type="RefSeq" id="XP_054194662.1">
    <molecule id="Q9BUN5-3"/>
    <property type="nucleotide sequence ID" value="XM_054338687.1"/>
</dbReference>
<dbReference type="RefSeq" id="XP_054194663.1">
    <molecule id="Q9BUN5-3"/>
    <property type="nucleotide sequence ID" value="XM_054338688.1"/>
</dbReference>
<dbReference type="RefSeq" id="XP_054194664.1">
    <molecule id="Q9BUN5-1"/>
    <property type="nucleotide sequence ID" value="XM_054338689.1"/>
</dbReference>
<dbReference type="SMR" id="Q9BUN5"/>
<dbReference type="BioGRID" id="122560">
    <property type="interactions" value="24"/>
</dbReference>
<dbReference type="DIP" id="DIP-60361N"/>
<dbReference type="FunCoup" id="Q9BUN5">
    <property type="interactions" value="98"/>
</dbReference>
<dbReference type="IntAct" id="Q9BUN5">
    <property type="interactions" value="22"/>
</dbReference>
<dbReference type="STRING" id="9606.ENSP00000413017"/>
<dbReference type="iPTMnet" id="Q9BUN5"/>
<dbReference type="PhosphoSitePlus" id="Q9BUN5"/>
<dbReference type="BioMuta" id="CCDC28B"/>
<dbReference type="DMDM" id="261260055"/>
<dbReference type="jPOST" id="Q9BUN5"/>
<dbReference type="MassIVE" id="Q9BUN5"/>
<dbReference type="PaxDb" id="9606-ENSP00000413017"/>
<dbReference type="PeptideAtlas" id="Q9BUN5"/>
<dbReference type="ProteomicsDB" id="79113">
    <molecule id="Q9BUN5-1"/>
</dbReference>
<dbReference type="Pumba" id="Q9BUN5"/>
<dbReference type="Antibodypedia" id="31247">
    <property type="antibodies" value="83 antibodies from 19 providers"/>
</dbReference>
<dbReference type="DNASU" id="79140"/>
<dbReference type="Ensembl" id="ENST00000373602.10">
    <molecule id="Q9BUN5-1"/>
    <property type="protein sequence ID" value="ENSP00000362704.5"/>
    <property type="gene ID" value="ENSG00000160050.16"/>
</dbReference>
<dbReference type="Ensembl" id="ENST00000421922.6">
    <molecule id="Q9BUN5-3"/>
    <property type="protein sequence ID" value="ENSP00000413017.2"/>
    <property type="gene ID" value="ENSG00000160050.16"/>
</dbReference>
<dbReference type="GeneID" id="79140"/>
<dbReference type="KEGG" id="hsa:79140"/>
<dbReference type="MANE-Select" id="ENST00000373602.10">
    <property type="protein sequence ID" value="ENSP00000362704.5"/>
    <property type="RefSeq nucleotide sequence ID" value="NM_024296.5"/>
    <property type="RefSeq protein sequence ID" value="NP_077272.2"/>
</dbReference>
<dbReference type="UCSC" id="uc001bul.2">
    <molecule id="Q9BUN5-1"/>
    <property type="organism name" value="human"/>
</dbReference>
<dbReference type="AGR" id="HGNC:28163"/>
<dbReference type="CTD" id="79140"/>
<dbReference type="DisGeNET" id="79140"/>
<dbReference type="GeneCards" id="CCDC28B"/>
<dbReference type="HGNC" id="HGNC:28163">
    <property type="gene designation" value="CCDC28B"/>
</dbReference>
<dbReference type="HPA" id="ENSG00000160050">
    <property type="expression patterns" value="Group enriched (skeletal muscle, tongue)"/>
</dbReference>
<dbReference type="MalaCards" id="CCDC28B"/>
<dbReference type="MIM" id="209900">
    <property type="type" value="phenotype"/>
</dbReference>
<dbReference type="MIM" id="610162">
    <property type="type" value="gene"/>
</dbReference>
<dbReference type="neXtProt" id="NX_Q9BUN5"/>
<dbReference type="OpenTargets" id="ENSG00000160050"/>
<dbReference type="PharmGKB" id="PA142672186"/>
<dbReference type="VEuPathDB" id="HostDB:ENSG00000160050"/>
<dbReference type="eggNOG" id="ENOG502RYUK">
    <property type="taxonomic scope" value="Eukaryota"/>
</dbReference>
<dbReference type="GeneTree" id="ENSGT00500000044870"/>
<dbReference type="HOGENOM" id="CLU_089059_1_0_1"/>
<dbReference type="InParanoid" id="Q9BUN5"/>
<dbReference type="OMA" id="GKYKRAH"/>
<dbReference type="OrthoDB" id="9977011at2759"/>
<dbReference type="PAN-GO" id="Q9BUN5">
    <property type="GO annotations" value="1 GO annotation based on evolutionary models"/>
</dbReference>
<dbReference type="PhylomeDB" id="Q9BUN5"/>
<dbReference type="TreeFam" id="TF323549"/>
<dbReference type="PathwayCommons" id="Q9BUN5"/>
<dbReference type="SignaLink" id="Q9BUN5"/>
<dbReference type="BioGRID-ORCS" id="79140">
    <property type="hits" value="13 hits in 1157 CRISPR screens"/>
</dbReference>
<dbReference type="ChiTaRS" id="CCDC28B">
    <property type="organism name" value="human"/>
</dbReference>
<dbReference type="GeneWiki" id="CCDC28B"/>
<dbReference type="GenomeRNAi" id="79140"/>
<dbReference type="Pharos" id="Q9BUN5">
    <property type="development level" value="Tbio"/>
</dbReference>
<dbReference type="PRO" id="PR:Q9BUN5"/>
<dbReference type="Proteomes" id="UP000005640">
    <property type="component" value="Chromosome 1"/>
</dbReference>
<dbReference type="RNAct" id="Q9BUN5">
    <property type="molecule type" value="protein"/>
</dbReference>
<dbReference type="Bgee" id="ENSG00000160050">
    <property type="expression patterns" value="Expressed in hindlimb stylopod muscle and 168 other cell types or tissues"/>
</dbReference>
<dbReference type="ExpressionAtlas" id="Q9BUN5">
    <property type="expression patterns" value="baseline and differential"/>
</dbReference>
<dbReference type="GO" id="GO:0005813">
    <property type="term" value="C:centrosome"/>
    <property type="evidence" value="ECO:0000314"/>
    <property type="project" value="UniProtKB"/>
</dbReference>
<dbReference type="GO" id="GO:0005737">
    <property type="term" value="C:cytoplasm"/>
    <property type="evidence" value="ECO:0007669"/>
    <property type="project" value="UniProtKB-KW"/>
</dbReference>
<dbReference type="GO" id="GO:0060271">
    <property type="term" value="P:cilium assembly"/>
    <property type="evidence" value="ECO:0000315"/>
    <property type="project" value="UniProtKB"/>
</dbReference>
<dbReference type="InterPro" id="IPR025271">
    <property type="entry name" value="CCDC28"/>
</dbReference>
<dbReference type="PANTHER" id="PTHR13400">
    <property type="entry name" value="CHEMOKINE C-C MOTIF RECEPTOR 1"/>
    <property type="match status" value="1"/>
</dbReference>
<dbReference type="PANTHER" id="PTHR13400:SF2">
    <property type="entry name" value="COILED-COIL DOMAIN-CONTAINING PROTEIN 28B"/>
    <property type="match status" value="1"/>
</dbReference>
<dbReference type="Pfam" id="PF13270">
    <property type="entry name" value="CCDC28"/>
    <property type="match status" value="1"/>
</dbReference>
<keyword id="KW-0007">Acetylation</keyword>
<keyword id="KW-0025">Alternative splicing</keyword>
<keyword id="KW-0083">Bardet-Biedl syndrome</keyword>
<keyword id="KW-1186">Ciliopathy</keyword>
<keyword id="KW-0970">Cilium biogenesis/degradation</keyword>
<keyword id="KW-0175">Coiled coil</keyword>
<keyword id="KW-0963">Cytoplasm</keyword>
<keyword id="KW-0206">Cytoskeleton</keyword>
<keyword id="KW-0550">Obesity</keyword>
<keyword id="KW-0597">Phosphoprotein</keyword>
<keyword id="KW-1267">Proteomics identification</keyword>
<keyword id="KW-1185">Reference proteome</keyword>
<reference key="1">
    <citation type="journal article" date="2004" name="Nat. Genet.">
        <title>Complete sequencing and characterization of 21,243 full-length human cDNAs.</title>
        <authorList>
            <person name="Ota T."/>
            <person name="Suzuki Y."/>
            <person name="Nishikawa T."/>
            <person name="Otsuki T."/>
            <person name="Sugiyama T."/>
            <person name="Irie R."/>
            <person name="Wakamatsu A."/>
            <person name="Hayashi K."/>
            <person name="Sato H."/>
            <person name="Nagai K."/>
            <person name="Kimura K."/>
            <person name="Makita H."/>
            <person name="Sekine M."/>
            <person name="Obayashi M."/>
            <person name="Nishi T."/>
            <person name="Shibahara T."/>
            <person name="Tanaka T."/>
            <person name="Ishii S."/>
            <person name="Yamamoto J."/>
            <person name="Saito K."/>
            <person name="Kawai Y."/>
            <person name="Isono Y."/>
            <person name="Nakamura Y."/>
            <person name="Nagahari K."/>
            <person name="Murakami K."/>
            <person name="Yasuda T."/>
            <person name="Iwayanagi T."/>
            <person name="Wagatsuma M."/>
            <person name="Shiratori A."/>
            <person name="Sudo H."/>
            <person name="Hosoiri T."/>
            <person name="Kaku Y."/>
            <person name="Kodaira H."/>
            <person name="Kondo H."/>
            <person name="Sugawara M."/>
            <person name="Takahashi M."/>
            <person name="Kanda K."/>
            <person name="Yokoi T."/>
            <person name="Furuya T."/>
            <person name="Kikkawa E."/>
            <person name="Omura Y."/>
            <person name="Abe K."/>
            <person name="Kamihara K."/>
            <person name="Katsuta N."/>
            <person name="Sato K."/>
            <person name="Tanikawa M."/>
            <person name="Yamazaki M."/>
            <person name="Ninomiya K."/>
            <person name="Ishibashi T."/>
            <person name="Yamashita H."/>
            <person name="Murakawa K."/>
            <person name="Fujimori K."/>
            <person name="Tanai H."/>
            <person name="Kimata M."/>
            <person name="Watanabe M."/>
            <person name="Hiraoka S."/>
            <person name="Chiba Y."/>
            <person name="Ishida S."/>
            <person name="Ono Y."/>
            <person name="Takiguchi S."/>
            <person name="Watanabe S."/>
            <person name="Yosida M."/>
            <person name="Hotuta T."/>
            <person name="Kusano J."/>
            <person name="Kanehori K."/>
            <person name="Takahashi-Fujii A."/>
            <person name="Hara H."/>
            <person name="Tanase T.-O."/>
            <person name="Nomura Y."/>
            <person name="Togiya S."/>
            <person name="Komai F."/>
            <person name="Hara R."/>
            <person name="Takeuchi K."/>
            <person name="Arita M."/>
            <person name="Imose N."/>
            <person name="Musashino K."/>
            <person name="Yuuki H."/>
            <person name="Oshima A."/>
            <person name="Sasaki N."/>
            <person name="Aotsuka S."/>
            <person name="Yoshikawa Y."/>
            <person name="Matsunawa H."/>
            <person name="Ichihara T."/>
            <person name="Shiohata N."/>
            <person name="Sano S."/>
            <person name="Moriya S."/>
            <person name="Momiyama H."/>
            <person name="Satoh N."/>
            <person name="Takami S."/>
            <person name="Terashima Y."/>
            <person name="Suzuki O."/>
            <person name="Nakagawa S."/>
            <person name="Senoh A."/>
            <person name="Mizoguchi H."/>
            <person name="Goto Y."/>
            <person name="Shimizu F."/>
            <person name="Wakebe H."/>
            <person name="Hishigaki H."/>
            <person name="Watanabe T."/>
            <person name="Sugiyama A."/>
            <person name="Takemoto M."/>
            <person name="Kawakami B."/>
            <person name="Yamazaki M."/>
            <person name="Watanabe K."/>
            <person name="Kumagai A."/>
            <person name="Itakura S."/>
            <person name="Fukuzumi Y."/>
            <person name="Fujimori Y."/>
            <person name="Komiyama M."/>
            <person name="Tashiro H."/>
            <person name="Tanigami A."/>
            <person name="Fujiwara T."/>
            <person name="Ono T."/>
            <person name="Yamada K."/>
            <person name="Fujii Y."/>
            <person name="Ozaki K."/>
            <person name="Hirao M."/>
            <person name="Ohmori Y."/>
            <person name="Kawabata A."/>
            <person name="Hikiji T."/>
            <person name="Kobatake N."/>
            <person name="Inagaki H."/>
            <person name="Ikema Y."/>
            <person name="Okamoto S."/>
            <person name="Okitani R."/>
            <person name="Kawakami T."/>
            <person name="Noguchi S."/>
            <person name="Itoh T."/>
            <person name="Shigeta K."/>
            <person name="Senba T."/>
            <person name="Matsumura K."/>
            <person name="Nakajima Y."/>
            <person name="Mizuno T."/>
            <person name="Morinaga M."/>
            <person name="Sasaki M."/>
            <person name="Togashi T."/>
            <person name="Oyama M."/>
            <person name="Hata H."/>
            <person name="Watanabe M."/>
            <person name="Komatsu T."/>
            <person name="Mizushima-Sugano J."/>
            <person name="Satoh T."/>
            <person name="Shirai Y."/>
            <person name="Takahashi Y."/>
            <person name="Nakagawa K."/>
            <person name="Okumura K."/>
            <person name="Nagase T."/>
            <person name="Nomura N."/>
            <person name="Kikuchi H."/>
            <person name="Masuho Y."/>
            <person name="Yamashita R."/>
            <person name="Nakai K."/>
            <person name="Yada T."/>
            <person name="Nakamura Y."/>
            <person name="Ohara O."/>
            <person name="Isogai T."/>
            <person name="Sugano S."/>
        </authorList>
    </citation>
    <scope>NUCLEOTIDE SEQUENCE [LARGE SCALE MRNA] (ISOFORM 1)</scope>
    <source>
        <tissue>Skeletal muscle</tissue>
    </source>
</reference>
<reference key="2">
    <citation type="journal article" date="2006" name="Nature">
        <title>The DNA sequence and biological annotation of human chromosome 1.</title>
        <authorList>
            <person name="Gregory S.G."/>
            <person name="Barlow K.F."/>
            <person name="McLay K.E."/>
            <person name="Kaul R."/>
            <person name="Swarbreck D."/>
            <person name="Dunham A."/>
            <person name="Scott C.E."/>
            <person name="Howe K.L."/>
            <person name="Woodfine K."/>
            <person name="Spencer C.C.A."/>
            <person name="Jones M.C."/>
            <person name="Gillson C."/>
            <person name="Searle S."/>
            <person name="Zhou Y."/>
            <person name="Kokocinski F."/>
            <person name="McDonald L."/>
            <person name="Evans R."/>
            <person name="Phillips K."/>
            <person name="Atkinson A."/>
            <person name="Cooper R."/>
            <person name="Jones C."/>
            <person name="Hall R.E."/>
            <person name="Andrews T.D."/>
            <person name="Lloyd C."/>
            <person name="Ainscough R."/>
            <person name="Almeida J.P."/>
            <person name="Ambrose K.D."/>
            <person name="Anderson F."/>
            <person name="Andrew R.W."/>
            <person name="Ashwell R.I.S."/>
            <person name="Aubin K."/>
            <person name="Babbage A.K."/>
            <person name="Bagguley C.L."/>
            <person name="Bailey J."/>
            <person name="Beasley H."/>
            <person name="Bethel G."/>
            <person name="Bird C.P."/>
            <person name="Bray-Allen S."/>
            <person name="Brown J.Y."/>
            <person name="Brown A.J."/>
            <person name="Buckley D."/>
            <person name="Burton J."/>
            <person name="Bye J."/>
            <person name="Carder C."/>
            <person name="Chapman J.C."/>
            <person name="Clark S.Y."/>
            <person name="Clarke G."/>
            <person name="Clee C."/>
            <person name="Cobley V."/>
            <person name="Collier R.E."/>
            <person name="Corby N."/>
            <person name="Coville G.J."/>
            <person name="Davies J."/>
            <person name="Deadman R."/>
            <person name="Dunn M."/>
            <person name="Earthrowl M."/>
            <person name="Ellington A.G."/>
            <person name="Errington H."/>
            <person name="Frankish A."/>
            <person name="Frankland J."/>
            <person name="French L."/>
            <person name="Garner P."/>
            <person name="Garnett J."/>
            <person name="Gay L."/>
            <person name="Ghori M.R.J."/>
            <person name="Gibson R."/>
            <person name="Gilby L.M."/>
            <person name="Gillett W."/>
            <person name="Glithero R.J."/>
            <person name="Grafham D.V."/>
            <person name="Griffiths C."/>
            <person name="Griffiths-Jones S."/>
            <person name="Grocock R."/>
            <person name="Hammond S."/>
            <person name="Harrison E.S.I."/>
            <person name="Hart E."/>
            <person name="Haugen E."/>
            <person name="Heath P.D."/>
            <person name="Holmes S."/>
            <person name="Holt K."/>
            <person name="Howden P.J."/>
            <person name="Hunt A.R."/>
            <person name="Hunt S.E."/>
            <person name="Hunter G."/>
            <person name="Isherwood J."/>
            <person name="James R."/>
            <person name="Johnson C."/>
            <person name="Johnson D."/>
            <person name="Joy A."/>
            <person name="Kay M."/>
            <person name="Kershaw J.K."/>
            <person name="Kibukawa M."/>
            <person name="Kimberley A.M."/>
            <person name="King A."/>
            <person name="Knights A.J."/>
            <person name="Lad H."/>
            <person name="Laird G."/>
            <person name="Lawlor S."/>
            <person name="Leongamornlert D.A."/>
            <person name="Lloyd D.M."/>
            <person name="Loveland J."/>
            <person name="Lovell J."/>
            <person name="Lush M.J."/>
            <person name="Lyne R."/>
            <person name="Martin S."/>
            <person name="Mashreghi-Mohammadi M."/>
            <person name="Matthews L."/>
            <person name="Matthews N.S.W."/>
            <person name="McLaren S."/>
            <person name="Milne S."/>
            <person name="Mistry S."/>
            <person name="Moore M.J.F."/>
            <person name="Nickerson T."/>
            <person name="O'Dell C.N."/>
            <person name="Oliver K."/>
            <person name="Palmeiri A."/>
            <person name="Palmer S.A."/>
            <person name="Parker A."/>
            <person name="Patel D."/>
            <person name="Pearce A.V."/>
            <person name="Peck A.I."/>
            <person name="Pelan S."/>
            <person name="Phelps K."/>
            <person name="Phillimore B.J."/>
            <person name="Plumb R."/>
            <person name="Rajan J."/>
            <person name="Raymond C."/>
            <person name="Rouse G."/>
            <person name="Saenphimmachak C."/>
            <person name="Sehra H.K."/>
            <person name="Sheridan E."/>
            <person name="Shownkeen R."/>
            <person name="Sims S."/>
            <person name="Skuce C.D."/>
            <person name="Smith M."/>
            <person name="Steward C."/>
            <person name="Subramanian S."/>
            <person name="Sycamore N."/>
            <person name="Tracey A."/>
            <person name="Tromans A."/>
            <person name="Van Helmond Z."/>
            <person name="Wall M."/>
            <person name="Wallis J.M."/>
            <person name="White S."/>
            <person name="Whitehead S.L."/>
            <person name="Wilkinson J.E."/>
            <person name="Willey D.L."/>
            <person name="Williams H."/>
            <person name="Wilming L."/>
            <person name="Wray P.W."/>
            <person name="Wu Z."/>
            <person name="Coulson A."/>
            <person name="Vaudin M."/>
            <person name="Sulston J.E."/>
            <person name="Durbin R.M."/>
            <person name="Hubbard T."/>
            <person name="Wooster R."/>
            <person name="Dunham I."/>
            <person name="Carter N.P."/>
            <person name="McVean G."/>
            <person name="Ross M.T."/>
            <person name="Harrow J."/>
            <person name="Olson M.V."/>
            <person name="Beck S."/>
            <person name="Rogers J."/>
            <person name="Bentley D.R."/>
        </authorList>
    </citation>
    <scope>NUCLEOTIDE SEQUENCE [LARGE SCALE GENOMIC DNA]</scope>
</reference>
<reference key="3">
    <citation type="submission" date="2005-09" db="EMBL/GenBank/DDBJ databases">
        <authorList>
            <person name="Mural R.J."/>
            <person name="Istrail S."/>
            <person name="Sutton G.G."/>
            <person name="Florea L."/>
            <person name="Halpern A.L."/>
            <person name="Mobarry C.M."/>
            <person name="Lippert R."/>
            <person name="Walenz B."/>
            <person name="Shatkay H."/>
            <person name="Dew I."/>
            <person name="Miller J.R."/>
            <person name="Flanigan M.J."/>
            <person name="Edwards N.J."/>
            <person name="Bolanos R."/>
            <person name="Fasulo D."/>
            <person name="Halldorsson B.V."/>
            <person name="Hannenhalli S."/>
            <person name="Turner R."/>
            <person name="Yooseph S."/>
            <person name="Lu F."/>
            <person name="Nusskern D.R."/>
            <person name="Shue B.C."/>
            <person name="Zheng X.H."/>
            <person name="Zhong F."/>
            <person name="Delcher A.L."/>
            <person name="Huson D.H."/>
            <person name="Kravitz S.A."/>
            <person name="Mouchard L."/>
            <person name="Reinert K."/>
            <person name="Remington K.A."/>
            <person name="Clark A.G."/>
            <person name="Waterman M.S."/>
            <person name="Eichler E.E."/>
            <person name="Adams M.D."/>
            <person name="Hunkapiller M.W."/>
            <person name="Myers E.W."/>
            <person name="Venter J.C."/>
        </authorList>
    </citation>
    <scope>NUCLEOTIDE SEQUENCE [LARGE SCALE GENOMIC DNA]</scope>
</reference>
<reference key="4">
    <citation type="journal article" date="2004" name="Genome Res.">
        <title>The status, quality, and expansion of the NIH full-length cDNA project: the Mammalian Gene Collection (MGC).</title>
        <authorList>
            <consortium name="The MGC Project Team"/>
        </authorList>
    </citation>
    <scope>NUCLEOTIDE SEQUENCE [LARGE SCALE MRNA] (ISOFORMS 1 AND 2)</scope>
    <source>
        <tissue>Lung</tissue>
        <tissue>Retinoblastoma</tissue>
    </source>
</reference>
<reference key="5">
    <citation type="journal article" date="2006" name="Nature">
        <title>Dissection of epistasis in oligogenic Bardet-Biedl syndrome.</title>
        <authorList>
            <person name="Badano J.L."/>
            <person name="Leitch C.C."/>
            <person name="Ansley S.J."/>
            <person name="May-Simera H."/>
            <person name="Lawson S."/>
            <person name="Lewis R.A."/>
            <person name="Beales P.L."/>
            <person name="Dietz H.C."/>
            <person name="Fisher S."/>
            <person name="Katsanis N."/>
        </authorList>
    </citation>
    <scope>INTERACTION WITH BBS1; BBS2; BBS4; BBS5; BBS6; BBS7 AND BBS8</scope>
    <scope>SUBCELLULAR LOCATION</scope>
    <scope>INVOLVEMENT AS MODIFIER GENE IN BBS</scope>
</reference>
<reference key="6">
    <citation type="journal article" date="2009" name="Sci. Signal.">
        <title>Quantitative phosphoproteomic analysis of T cell receptor signaling reveals system-wide modulation of protein-protein interactions.</title>
        <authorList>
            <person name="Mayya V."/>
            <person name="Lundgren D.H."/>
            <person name="Hwang S.-I."/>
            <person name="Rezaul K."/>
            <person name="Wu L."/>
            <person name="Eng J.K."/>
            <person name="Rodionov V."/>
            <person name="Han D.K."/>
        </authorList>
    </citation>
    <scope>PHOSPHORYLATION [LARGE SCALE ANALYSIS] AT SER-46</scope>
    <scope>IDENTIFICATION BY MASS SPECTROMETRY [LARGE SCALE ANALYSIS]</scope>
    <source>
        <tissue>Leukemic T-cell</tissue>
    </source>
</reference>
<reference key="7">
    <citation type="journal article" date="2012" name="Proc. Natl. Acad. Sci. U.S.A.">
        <title>N-terminal acetylome analyses and functional insights of the N-terminal acetyltransferase NatB.</title>
        <authorList>
            <person name="Van Damme P."/>
            <person name="Lasa M."/>
            <person name="Polevoda B."/>
            <person name="Gazquez C."/>
            <person name="Elosegui-Artola A."/>
            <person name="Kim D.S."/>
            <person name="De Juan-Pardo E."/>
            <person name="Demeyer K."/>
            <person name="Hole K."/>
            <person name="Larrea E."/>
            <person name="Timmerman E."/>
            <person name="Prieto J."/>
            <person name="Arnesen T."/>
            <person name="Sherman F."/>
            <person name="Gevaert K."/>
            <person name="Aldabe R."/>
        </authorList>
    </citation>
    <scope>ACETYLATION [LARGE SCALE ANALYSIS] AT MET-1</scope>
    <scope>IDENTIFICATION BY MASS SPECTROMETRY [LARGE SCALE ANALYSIS]</scope>
</reference>
<reference key="8">
    <citation type="journal article" date="2013" name="Hum. Genet.">
        <title>Characterization of CCDC28B reveals its role in ciliogenesis and provides insight to understand its modifier effect on Bardet-Biedl syndrome.</title>
        <authorList>
            <person name="Cardenas-Rodriguez M."/>
            <person name="Osborn D.P."/>
            <person name="Irigoin F."/>
            <person name="Grana M."/>
            <person name="Romero H."/>
            <person name="Beales P.L."/>
            <person name="Badano J.L."/>
        </authorList>
    </citation>
    <scope>FUNCTION IN CILIOGENESIS</scope>
</reference>
<reference key="9">
    <citation type="journal article" date="2013" name="Hum. Mol. Genet.">
        <title>The Bardet-Biedl syndrome-related protein CCDC28B modulates mTORC2 function and interacts with SIN1 to control cilia length independently of the mTOR complex.</title>
        <authorList>
            <person name="Cardenas-Rodriguez M."/>
            <person name="Irigoin F."/>
            <person name="Osborn D.P."/>
            <person name="Gascue C."/>
            <person name="Katsanis N."/>
            <person name="Beales P.L."/>
            <person name="Badano J.L."/>
        </authorList>
    </citation>
    <scope>FUNCTION</scope>
    <scope>INTERACTION WITH MAPKAP1 AND RICTOR</scope>
</reference>
<reference key="10">
    <citation type="journal article" date="2013" name="J. Proteome Res.">
        <title>Toward a comprehensive characterization of a human cancer cell phosphoproteome.</title>
        <authorList>
            <person name="Zhou H."/>
            <person name="Di Palma S."/>
            <person name="Preisinger C."/>
            <person name="Peng M."/>
            <person name="Polat A.N."/>
            <person name="Heck A.J."/>
            <person name="Mohammed S."/>
        </authorList>
    </citation>
    <scope>PHOSPHORYLATION [LARGE SCALE ANALYSIS] AT SER-115</scope>
    <scope>IDENTIFICATION BY MASS SPECTROMETRY [LARGE SCALE ANALYSIS]</scope>
    <source>
        <tissue>Erythroleukemia</tissue>
    </source>
</reference>